<keyword id="KW-0066">ATP synthesis</keyword>
<keyword id="KW-1003">Cell membrane</keyword>
<keyword id="KW-0138">CF(0)</keyword>
<keyword id="KW-0375">Hydrogen ion transport</keyword>
<keyword id="KW-0406">Ion transport</keyword>
<keyword id="KW-0446">Lipid-binding</keyword>
<keyword id="KW-0472">Membrane</keyword>
<keyword id="KW-0812">Transmembrane</keyword>
<keyword id="KW-1133">Transmembrane helix</keyword>
<keyword id="KW-0813">Transport</keyword>
<evidence type="ECO:0000255" key="1">
    <source>
        <dbReference type="HAMAP-Rule" id="MF_01396"/>
    </source>
</evidence>
<feature type="chain" id="PRO_0000112141" description="ATP synthase subunit c">
    <location>
        <begin position="1"/>
        <end position="79"/>
    </location>
</feature>
<feature type="transmembrane region" description="Helical" evidence="1">
    <location>
        <begin position="11"/>
        <end position="31"/>
    </location>
</feature>
<feature type="transmembrane region" description="Helical" evidence="1">
    <location>
        <begin position="53"/>
        <end position="73"/>
    </location>
</feature>
<feature type="site" description="Reversibly protonated during proton transport" evidence="1">
    <location>
        <position position="61"/>
    </location>
</feature>
<protein>
    <recommendedName>
        <fullName evidence="1">ATP synthase subunit c</fullName>
    </recommendedName>
    <alternativeName>
        <fullName evidence="1">ATP synthase F(0) sector subunit c</fullName>
    </alternativeName>
    <alternativeName>
        <fullName evidence="1">F-type ATPase subunit c</fullName>
        <shortName evidence="1">F-ATPase subunit c</shortName>
    </alternativeName>
    <alternativeName>
        <fullName evidence="1">Lipid-binding protein</fullName>
    </alternativeName>
</protein>
<name>ATPL_BUCAP</name>
<reference key="1">
    <citation type="journal article" date="1997" name="Curr. Microbiol.">
        <title>The (F1F0) ATP synthase of Buchnera aphidicola (endosymbiont of aphids): genetic analysis of the putative ATP operon.</title>
        <authorList>
            <person name="Clark M.A."/>
            <person name="Baumann P."/>
        </authorList>
    </citation>
    <scope>NUCLEOTIDE SEQUENCE [GENOMIC DNA]</scope>
</reference>
<reference key="2">
    <citation type="journal article" date="1998" name="Curr. Microbiol.">
        <title>Sequence analysis of a 34.7-kb DNA segment from the genome of Buchnera aphidicola (endosymbiont of aphids) containing groEL, dnaA, the atp operon, gidA, and rho.</title>
        <authorList>
            <person name="Clark M.A."/>
            <person name="Baumann L."/>
            <person name="Baumann P."/>
        </authorList>
    </citation>
    <scope>NUCLEOTIDE SEQUENCE [GENOMIC DNA]</scope>
</reference>
<reference key="3">
    <citation type="journal article" date="2002" name="Science">
        <title>50 million years of genomic stasis in endosymbiotic bacteria.</title>
        <authorList>
            <person name="Tamas I."/>
            <person name="Klasson L."/>
            <person name="Canbaeck B."/>
            <person name="Naeslund A.K."/>
            <person name="Eriksson A.-S."/>
            <person name="Wernegreen J.J."/>
            <person name="Sandstroem J.P."/>
            <person name="Moran N.A."/>
            <person name="Andersson S.G.E."/>
        </authorList>
    </citation>
    <scope>NUCLEOTIDE SEQUENCE [LARGE SCALE GENOMIC DNA]</scope>
    <source>
        <strain>Sg</strain>
    </source>
</reference>
<comment type="function">
    <text evidence="1">F(1)F(0) ATP synthase produces ATP from ADP in the presence of a proton or sodium gradient. F-type ATPases consist of two structural domains, F(1) containing the extramembraneous catalytic core and F(0) containing the membrane proton channel, linked together by a central stalk and a peripheral stalk. During catalysis, ATP synthesis in the catalytic domain of F(1) is coupled via a rotary mechanism of the central stalk subunits to proton translocation.</text>
</comment>
<comment type="function">
    <text evidence="1">Key component of the F(0) channel; it plays a direct role in translocation across the membrane. A homomeric c-ring of between 10-14 subunits forms the central stalk rotor element with the F(1) delta and epsilon subunits.</text>
</comment>
<comment type="subunit">
    <text evidence="1">F-type ATPases have 2 components, F(1) - the catalytic core - and F(0) - the membrane proton channel. F(1) has five subunits: alpha(3), beta(3), gamma(1), delta(1), epsilon(1). F(0) has three main subunits: a(1), b(2) and c(10-14). The alpha and beta chains form an alternating ring which encloses part of the gamma chain. F(1) is attached to F(0) by a central stalk formed by the gamma and epsilon chains, while a peripheral stalk is formed by the delta and b chains.</text>
</comment>
<comment type="subcellular location">
    <subcellularLocation>
        <location evidence="1">Cell membrane</location>
        <topology evidence="1">Multi-pass membrane protein</topology>
    </subcellularLocation>
</comment>
<comment type="similarity">
    <text evidence="1">Belongs to the ATPase C chain family.</text>
</comment>
<gene>
    <name evidence="1" type="primary">atpE</name>
    <name type="ordered locus">BUsg_003</name>
</gene>
<accession>O51877</accession>
<sequence>MESLNVDMLYIAVAIMIGLAAIGAAIGIGILGSKFLEGAARQPDLVPLLRTQFFVVMGLVDAIPMIAVGLGLYMLFAIS</sequence>
<proteinExistence type="inferred from homology"/>
<dbReference type="EMBL" id="AF008210">
    <property type="protein sequence ID" value="AAC38115.1"/>
    <property type="molecule type" value="Genomic_DNA"/>
</dbReference>
<dbReference type="EMBL" id="AE013218">
    <property type="protein sequence ID" value="AAM67575.1"/>
    <property type="molecule type" value="Genomic_DNA"/>
</dbReference>
<dbReference type="RefSeq" id="WP_011053541.1">
    <property type="nucleotide sequence ID" value="NC_004061.1"/>
</dbReference>
<dbReference type="SMR" id="O51877"/>
<dbReference type="STRING" id="198804.BUsg_003"/>
<dbReference type="GeneID" id="93003465"/>
<dbReference type="KEGG" id="bas:BUsg_003"/>
<dbReference type="eggNOG" id="ENOG5032S3K">
    <property type="taxonomic scope" value="Bacteria"/>
</dbReference>
<dbReference type="HOGENOM" id="CLU_148047_1_0_6"/>
<dbReference type="Proteomes" id="UP000000416">
    <property type="component" value="Chromosome"/>
</dbReference>
<dbReference type="GO" id="GO:0005886">
    <property type="term" value="C:plasma membrane"/>
    <property type="evidence" value="ECO:0007669"/>
    <property type="project" value="UniProtKB-SubCell"/>
</dbReference>
<dbReference type="GO" id="GO:0045259">
    <property type="term" value="C:proton-transporting ATP synthase complex"/>
    <property type="evidence" value="ECO:0007669"/>
    <property type="project" value="UniProtKB-KW"/>
</dbReference>
<dbReference type="GO" id="GO:0033177">
    <property type="term" value="C:proton-transporting two-sector ATPase complex, proton-transporting domain"/>
    <property type="evidence" value="ECO:0007669"/>
    <property type="project" value="InterPro"/>
</dbReference>
<dbReference type="GO" id="GO:0008289">
    <property type="term" value="F:lipid binding"/>
    <property type="evidence" value="ECO:0007669"/>
    <property type="project" value="UniProtKB-KW"/>
</dbReference>
<dbReference type="GO" id="GO:0046933">
    <property type="term" value="F:proton-transporting ATP synthase activity, rotational mechanism"/>
    <property type="evidence" value="ECO:0007669"/>
    <property type="project" value="UniProtKB-UniRule"/>
</dbReference>
<dbReference type="CDD" id="cd18185">
    <property type="entry name" value="ATP-synt_Fo_c_ATPE"/>
    <property type="match status" value="1"/>
</dbReference>
<dbReference type="FunFam" id="1.20.20.10:FF:000002">
    <property type="entry name" value="ATP synthase subunit c"/>
    <property type="match status" value="1"/>
</dbReference>
<dbReference type="Gene3D" id="1.20.20.10">
    <property type="entry name" value="F1F0 ATP synthase subunit C"/>
    <property type="match status" value="1"/>
</dbReference>
<dbReference type="HAMAP" id="MF_01396">
    <property type="entry name" value="ATP_synth_c_bact"/>
    <property type="match status" value="1"/>
</dbReference>
<dbReference type="InterPro" id="IPR005953">
    <property type="entry name" value="ATP_synth_csu_bac/chlpt"/>
</dbReference>
<dbReference type="InterPro" id="IPR000454">
    <property type="entry name" value="ATP_synth_F0_csu"/>
</dbReference>
<dbReference type="InterPro" id="IPR020537">
    <property type="entry name" value="ATP_synth_F0_csu_DDCD_BS"/>
</dbReference>
<dbReference type="InterPro" id="IPR038662">
    <property type="entry name" value="ATP_synth_F0_csu_sf"/>
</dbReference>
<dbReference type="InterPro" id="IPR002379">
    <property type="entry name" value="ATPase_proteolipid_c-like_dom"/>
</dbReference>
<dbReference type="InterPro" id="IPR035921">
    <property type="entry name" value="F/V-ATP_Csub_sf"/>
</dbReference>
<dbReference type="NCBIfam" id="TIGR01260">
    <property type="entry name" value="ATP_synt_c"/>
    <property type="match status" value="1"/>
</dbReference>
<dbReference type="NCBIfam" id="NF005363">
    <property type="entry name" value="PRK06876.1"/>
    <property type="match status" value="1"/>
</dbReference>
<dbReference type="Pfam" id="PF00137">
    <property type="entry name" value="ATP-synt_C"/>
    <property type="match status" value="1"/>
</dbReference>
<dbReference type="PRINTS" id="PR00124">
    <property type="entry name" value="ATPASEC"/>
</dbReference>
<dbReference type="SUPFAM" id="SSF81333">
    <property type="entry name" value="F1F0 ATP synthase subunit C"/>
    <property type="match status" value="1"/>
</dbReference>
<dbReference type="PROSITE" id="PS00605">
    <property type="entry name" value="ATPASE_C"/>
    <property type="match status" value="1"/>
</dbReference>
<organism>
    <name type="scientific">Buchnera aphidicola subsp. Schizaphis graminum (strain Sg)</name>
    <dbReference type="NCBI Taxonomy" id="198804"/>
    <lineage>
        <taxon>Bacteria</taxon>
        <taxon>Pseudomonadati</taxon>
        <taxon>Pseudomonadota</taxon>
        <taxon>Gammaproteobacteria</taxon>
        <taxon>Enterobacterales</taxon>
        <taxon>Erwiniaceae</taxon>
        <taxon>Buchnera</taxon>
    </lineage>
</organism>